<protein>
    <recommendedName>
        <fullName>Spherulin-1B</fullName>
    </recommendedName>
</protein>
<name>SR1B_PHYPO</name>
<feature type="signal peptide">
    <location>
        <begin position="1"/>
        <end position="20"/>
    </location>
</feature>
<feature type="chain" id="PRO_0000010847" description="Spherulin-1B">
    <location>
        <begin position="21"/>
        <end position="248"/>
    </location>
</feature>
<feature type="domain" description="Cupin type-1" evidence="2">
    <location>
        <begin position="61"/>
        <end position="207"/>
    </location>
</feature>
<feature type="binding site" evidence="1">
    <location>
        <position position="110"/>
    </location>
    <ligand>
        <name>Mn(2+)</name>
        <dbReference type="ChEBI" id="CHEBI:29035"/>
    </ligand>
</feature>
<feature type="binding site" evidence="1">
    <location>
        <position position="112"/>
    </location>
    <ligand>
        <name>Mn(2+)</name>
        <dbReference type="ChEBI" id="CHEBI:29035"/>
    </ligand>
</feature>
<feature type="binding site" evidence="1">
    <location>
        <position position="117"/>
    </location>
    <ligand>
        <name>Mn(2+)</name>
        <dbReference type="ChEBI" id="CHEBI:29035"/>
    </ligand>
</feature>
<feature type="binding site" evidence="1">
    <location>
        <position position="157"/>
    </location>
    <ligand>
        <name>Mn(2+)</name>
        <dbReference type="ChEBI" id="CHEBI:29035"/>
    </ligand>
</feature>
<feature type="glycosylation site" description="N-linked (GlcNAc...) asparagine" evidence="2">
    <location>
        <position position="200"/>
    </location>
</feature>
<comment type="subcellular location">
    <subcellularLocation>
        <location>Secreted</location>
        <location>Cell wall</location>
    </subcellularLocation>
</comment>
<comment type="developmental stage">
    <text>Accumulates specifically during spherulation.</text>
</comment>
<comment type="miscellaneous">
    <text>Spherulin is a major encystment-specific protein.</text>
</comment>
<comment type="similarity">
    <text evidence="3">Belongs to the germin family.</text>
</comment>
<proteinExistence type="evidence at transcript level"/>
<reference key="1">
    <citation type="journal article" date="1987" name="Gene">
        <title>Gene families encode the major encystment-specific proteins of Physarum polycephalum plasmodia.</title>
        <authorList>
            <person name="Bernier F."/>
            <person name="Lemieux G."/>
            <person name="Pallotta D."/>
        </authorList>
    </citation>
    <scope>NUCLEOTIDE SEQUENCE [MRNA]</scope>
</reference>
<reference key="2">
    <citation type="journal article" date="1995" name="J. Mol. Evol.">
        <title>Seed storage proteins of spermatophytes share a common ancestor with desiccation proteins of fungi.</title>
        <authorList>
            <person name="Baumlein H."/>
            <person name="Braun H."/>
            <person name="Kakhovskaya I.A."/>
            <person name="Shutov A.D."/>
        </authorList>
    </citation>
    <scope>NUCLEOTIDE SEQUENCE [GENOMIC DNA] OF 65-209</scope>
</reference>
<dbReference type="EMBL" id="M18429">
    <property type="protein sequence ID" value="AAA29979.1"/>
    <property type="molecule type" value="mRNA"/>
</dbReference>
<dbReference type="EMBL" id="Z50151">
    <property type="protein sequence ID" value="CAA90512.1"/>
    <property type="molecule type" value="Genomic_DNA"/>
</dbReference>
<dbReference type="PIR" id="A29624">
    <property type="entry name" value="A29624"/>
</dbReference>
<dbReference type="SMR" id="P09351"/>
<dbReference type="GO" id="GO:0005576">
    <property type="term" value="C:extracellular region"/>
    <property type="evidence" value="ECO:0007669"/>
    <property type="project" value="UniProtKB-KW"/>
</dbReference>
<dbReference type="GO" id="GO:0030145">
    <property type="term" value="F:manganese ion binding"/>
    <property type="evidence" value="ECO:0007669"/>
    <property type="project" value="InterPro"/>
</dbReference>
<dbReference type="CDD" id="cd02241">
    <property type="entry name" value="cupin_OxOx"/>
    <property type="match status" value="1"/>
</dbReference>
<dbReference type="Gene3D" id="2.60.120.10">
    <property type="entry name" value="Jelly Rolls"/>
    <property type="match status" value="1"/>
</dbReference>
<dbReference type="InterPro" id="IPR006045">
    <property type="entry name" value="Cupin_1"/>
</dbReference>
<dbReference type="InterPro" id="IPR001929">
    <property type="entry name" value="Germin"/>
</dbReference>
<dbReference type="InterPro" id="IPR019780">
    <property type="entry name" value="Germin_Mn-BS"/>
</dbReference>
<dbReference type="InterPro" id="IPR014710">
    <property type="entry name" value="RmlC-like_jellyroll"/>
</dbReference>
<dbReference type="InterPro" id="IPR011051">
    <property type="entry name" value="RmlC_Cupin_sf"/>
</dbReference>
<dbReference type="PANTHER" id="PTHR31238">
    <property type="entry name" value="GERMIN-LIKE PROTEIN SUBFAMILY 3 MEMBER 3"/>
    <property type="match status" value="1"/>
</dbReference>
<dbReference type="Pfam" id="PF00190">
    <property type="entry name" value="Cupin_1"/>
    <property type="match status" value="1"/>
</dbReference>
<dbReference type="PRINTS" id="PR00325">
    <property type="entry name" value="GERMIN"/>
</dbReference>
<dbReference type="SMART" id="SM00835">
    <property type="entry name" value="Cupin_1"/>
    <property type="match status" value="1"/>
</dbReference>
<dbReference type="SUPFAM" id="SSF51182">
    <property type="entry name" value="RmlC-like cupins"/>
    <property type="match status" value="1"/>
</dbReference>
<dbReference type="PROSITE" id="PS00725">
    <property type="entry name" value="GERMIN"/>
    <property type="match status" value="1"/>
</dbReference>
<accession>P09351</accession>
<organism>
    <name type="scientific">Physarum polycephalum</name>
    <name type="common">Slime mold</name>
    <dbReference type="NCBI Taxonomy" id="5791"/>
    <lineage>
        <taxon>Eukaryota</taxon>
        <taxon>Amoebozoa</taxon>
        <taxon>Evosea</taxon>
        <taxon>Eumycetozoa</taxon>
        <taxon>Myxogastria</taxon>
        <taxon>Myxogastromycetidae</taxon>
        <taxon>Physariida</taxon>
        <taxon>Physaraceae</taxon>
        <taxon>Physarum</taxon>
    </lineage>
</organism>
<evidence type="ECO:0000250" key="1"/>
<evidence type="ECO:0000255" key="2"/>
<evidence type="ECO:0000305" key="3"/>
<keyword id="KW-0134">Cell wall</keyword>
<keyword id="KW-0325">Glycoprotein</keyword>
<keyword id="KW-0464">Manganese</keyword>
<keyword id="KW-0479">Metal-binding</keyword>
<keyword id="KW-0964">Secreted</keyword>
<keyword id="KW-0732">Signal</keyword>
<sequence length="248" mass="26435">MQVRNILVALVVVCFAVSEAATQAPTSPPDSSASAEQVAQLLNAPSELDRLKLLKDNQFVFDFKNSKLGVTQSAGGKTVATSRTDFPAVIGHNIAMTVGFIEACGINLPHTHPRATEINFIAKGRFQAGFFLENQATFIGHILEEGMATVFPQGAIHFEINLECEPAMFVAAFNNEDPGVQTTASSFFGLPADVAAVSLNISSIQTVEDLAKYLPHNPAIAMKECMQRCGMTGSSESSESSEDSSCSD</sequence>